<evidence type="ECO:0000255" key="1">
    <source>
        <dbReference type="HAMAP-Rule" id="MF_00569"/>
    </source>
</evidence>
<name>NADA_HELPH</name>
<organism>
    <name type="scientific">Helicobacter pylori (strain HPAG1)</name>
    <dbReference type="NCBI Taxonomy" id="357544"/>
    <lineage>
        <taxon>Bacteria</taxon>
        <taxon>Pseudomonadati</taxon>
        <taxon>Campylobacterota</taxon>
        <taxon>Epsilonproteobacteria</taxon>
        <taxon>Campylobacterales</taxon>
        <taxon>Helicobacteraceae</taxon>
        <taxon>Helicobacter</taxon>
    </lineage>
</organism>
<proteinExistence type="inferred from homology"/>
<sequence>MPTDNDLKTSIVELLHDLDALLVAHFYQKDEIVELAHHTGDSLELAKIASQSDKNLIVFCGVHFMGESVKALAFEKQVIMPKLSCCSMARMIDSHYYDRSVHLLKECGVKEFYPITYINSNAEVKAKVAKDGGVVCTSRNASKIFNHALKQNKKIFFLPDKCLGENLALENGLKSAILGVNSPEEIKNADVVCYNGFCSVHQLFKLEDIEFYRQKYPDILIAVHPECEPSVVSNADFSGSTSQIIEFVEKLSPNQKVAIGTESHLVNRLKAKRHHQNTFILSSTLAFCPTMNETTLKDLFEVLKAYKNHRAYNAVELKDEVAHWAKLALTKMMELS</sequence>
<dbReference type="EC" id="2.5.1.72" evidence="1"/>
<dbReference type="EMBL" id="CP000241">
    <property type="protein sequence ID" value="ABF85370.1"/>
    <property type="molecule type" value="Genomic_DNA"/>
</dbReference>
<dbReference type="RefSeq" id="WP_001141832.1">
    <property type="nucleotide sequence ID" value="NC_008086.1"/>
</dbReference>
<dbReference type="SMR" id="Q1CRQ2"/>
<dbReference type="KEGG" id="hpa:HPAG1_1303"/>
<dbReference type="HOGENOM" id="CLU_047382_2_0_7"/>
<dbReference type="UniPathway" id="UPA00253">
    <property type="reaction ID" value="UER00327"/>
</dbReference>
<dbReference type="GO" id="GO:0005829">
    <property type="term" value="C:cytosol"/>
    <property type="evidence" value="ECO:0007669"/>
    <property type="project" value="TreeGrafter"/>
</dbReference>
<dbReference type="GO" id="GO:0051539">
    <property type="term" value="F:4 iron, 4 sulfur cluster binding"/>
    <property type="evidence" value="ECO:0007669"/>
    <property type="project" value="UniProtKB-KW"/>
</dbReference>
<dbReference type="GO" id="GO:0046872">
    <property type="term" value="F:metal ion binding"/>
    <property type="evidence" value="ECO:0007669"/>
    <property type="project" value="UniProtKB-KW"/>
</dbReference>
<dbReference type="GO" id="GO:0008987">
    <property type="term" value="F:quinolinate synthetase A activity"/>
    <property type="evidence" value="ECO:0007669"/>
    <property type="project" value="UniProtKB-UniRule"/>
</dbReference>
<dbReference type="GO" id="GO:0034628">
    <property type="term" value="P:'de novo' NAD biosynthetic process from L-aspartate"/>
    <property type="evidence" value="ECO:0007669"/>
    <property type="project" value="TreeGrafter"/>
</dbReference>
<dbReference type="FunFam" id="3.40.50.10800:FF:000001">
    <property type="entry name" value="Quinolinate synthase A"/>
    <property type="match status" value="1"/>
</dbReference>
<dbReference type="Gene3D" id="3.40.50.10800">
    <property type="entry name" value="NadA-like"/>
    <property type="match status" value="3"/>
</dbReference>
<dbReference type="HAMAP" id="MF_00569">
    <property type="entry name" value="NadA_type3"/>
    <property type="match status" value="1"/>
</dbReference>
<dbReference type="InterPro" id="IPR003473">
    <property type="entry name" value="NadA"/>
</dbReference>
<dbReference type="InterPro" id="IPR036094">
    <property type="entry name" value="NadA_sf"/>
</dbReference>
<dbReference type="InterPro" id="IPR023515">
    <property type="entry name" value="Quinolinate_synth_A_type3"/>
</dbReference>
<dbReference type="NCBIfam" id="TIGR00550">
    <property type="entry name" value="nadA"/>
    <property type="match status" value="1"/>
</dbReference>
<dbReference type="NCBIfam" id="NF006885">
    <property type="entry name" value="PRK09375.2-6"/>
    <property type="match status" value="1"/>
</dbReference>
<dbReference type="PANTHER" id="PTHR30573:SF0">
    <property type="entry name" value="QUINOLINATE SYNTHASE, CHLOROPLASTIC"/>
    <property type="match status" value="1"/>
</dbReference>
<dbReference type="PANTHER" id="PTHR30573">
    <property type="entry name" value="QUINOLINATE SYNTHETASE A"/>
    <property type="match status" value="1"/>
</dbReference>
<dbReference type="Pfam" id="PF02445">
    <property type="entry name" value="NadA"/>
    <property type="match status" value="1"/>
</dbReference>
<dbReference type="SUPFAM" id="SSF142754">
    <property type="entry name" value="NadA-like"/>
    <property type="match status" value="1"/>
</dbReference>
<keyword id="KW-0004">4Fe-4S</keyword>
<keyword id="KW-0963">Cytoplasm</keyword>
<keyword id="KW-0408">Iron</keyword>
<keyword id="KW-0411">Iron-sulfur</keyword>
<keyword id="KW-0479">Metal-binding</keyword>
<keyword id="KW-0662">Pyridine nucleotide biosynthesis</keyword>
<keyword id="KW-0808">Transferase</keyword>
<protein>
    <recommendedName>
        <fullName evidence="1">Quinolinate synthase</fullName>
        <ecNumber evidence="1">2.5.1.72</ecNumber>
    </recommendedName>
</protein>
<comment type="function">
    <text evidence="1">Catalyzes the condensation of iminoaspartate with dihydroxyacetone phosphate to form quinolinate.</text>
</comment>
<comment type="catalytic activity">
    <reaction evidence="1">
        <text>iminosuccinate + dihydroxyacetone phosphate = quinolinate + phosphate + 2 H2O + H(+)</text>
        <dbReference type="Rhea" id="RHEA:25888"/>
        <dbReference type="ChEBI" id="CHEBI:15377"/>
        <dbReference type="ChEBI" id="CHEBI:15378"/>
        <dbReference type="ChEBI" id="CHEBI:29959"/>
        <dbReference type="ChEBI" id="CHEBI:43474"/>
        <dbReference type="ChEBI" id="CHEBI:57642"/>
        <dbReference type="ChEBI" id="CHEBI:77875"/>
        <dbReference type="EC" id="2.5.1.72"/>
    </reaction>
    <physiologicalReaction direction="left-to-right" evidence="1">
        <dbReference type="Rhea" id="RHEA:25889"/>
    </physiologicalReaction>
</comment>
<comment type="cofactor">
    <cofactor evidence="1">
        <name>[4Fe-4S] cluster</name>
        <dbReference type="ChEBI" id="CHEBI:49883"/>
    </cofactor>
    <text evidence="1">Binds 1 [4Fe-4S] cluster per subunit.</text>
</comment>
<comment type="pathway">
    <text evidence="1">Cofactor biosynthesis; NAD(+) biosynthesis; quinolinate from iminoaspartate: step 1/1.</text>
</comment>
<comment type="subcellular location">
    <subcellularLocation>
        <location evidence="1">Cytoplasm</location>
    </subcellularLocation>
</comment>
<comment type="similarity">
    <text evidence="1">Belongs to the quinolinate synthase family. Type 3 subfamily.</text>
</comment>
<reference key="1">
    <citation type="journal article" date="2006" name="Proc. Natl. Acad. Sci. U.S.A.">
        <title>The complete genome sequence of a chronic atrophic gastritis Helicobacter pylori strain: evolution during disease progression.</title>
        <authorList>
            <person name="Oh J.D."/>
            <person name="Kling-Baeckhed H."/>
            <person name="Giannakis M."/>
            <person name="Xu J."/>
            <person name="Fulton R.S."/>
            <person name="Fulton L.A."/>
            <person name="Cordum H.S."/>
            <person name="Wang C."/>
            <person name="Elliott G."/>
            <person name="Edwards J."/>
            <person name="Mardis E.R."/>
            <person name="Engstrand L.G."/>
            <person name="Gordon J.I."/>
        </authorList>
    </citation>
    <scope>NUCLEOTIDE SEQUENCE [LARGE SCALE GENOMIC DNA]</scope>
    <source>
        <strain>HPAG1</strain>
    </source>
</reference>
<feature type="chain" id="PRO_1000024994" description="Quinolinate synthase">
    <location>
        <begin position="1"/>
        <end position="336"/>
    </location>
</feature>
<feature type="binding site" evidence="1">
    <location>
        <position position="25"/>
    </location>
    <ligand>
        <name>iminosuccinate</name>
        <dbReference type="ChEBI" id="CHEBI:77875"/>
    </ligand>
</feature>
<feature type="binding site" evidence="1">
    <location>
        <position position="42"/>
    </location>
    <ligand>
        <name>iminosuccinate</name>
        <dbReference type="ChEBI" id="CHEBI:77875"/>
    </ligand>
</feature>
<feature type="binding site" evidence="1">
    <location>
        <position position="86"/>
    </location>
    <ligand>
        <name>[4Fe-4S] cluster</name>
        <dbReference type="ChEBI" id="CHEBI:49883"/>
    </ligand>
</feature>
<feature type="binding site" evidence="1">
    <location>
        <begin position="117"/>
        <end position="119"/>
    </location>
    <ligand>
        <name>iminosuccinate</name>
        <dbReference type="ChEBI" id="CHEBI:77875"/>
    </ligand>
</feature>
<feature type="binding site" evidence="1">
    <location>
        <position position="138"/>
    </location>
    <ligand>
        <name>iminosuccinate</name>
        <dbReference type="ChEBI" id="CHEBI:77875"/>
    </ligand>
</feature>
<feature type="binding site" evidence="1">
    <location>
        <position position="198"/>
    </location>
    <ligand>
        <name>[4Fe-4S] cluster</name>
        <dbReference type="ChEBI" id="CHEBI:49883"/>
    </ligand>
</feature>
<feature type="binding site" evidence="1">
    <location>
        <begin position="224"/>
        <end position="226"/>
    </location>
    <ligand>
        <name>iminosuccinate</name>
        <dbReference type="ChEBI" id="CHEBI:77875"/>
    </ligand>
</feature>
<feature type="binding site" evidence="1">
    <location>
        <position position="241"/>
    </location>
    <ligand>
        <name>iminosuccinate</name>
        <dbReference type="ChEBI" id="CHEBI:77875"/>
    </ligand>
</feature>
<feature type="binding site" evidence="1">
    <location>
        <position position="288"/>
    </location>
    <ligand>
        <name>[4Fe-4S] cluster</name>
        <dbReference type="ChEBI" id="CHEBI:49883"/>
    </ligand>
</feature>
<gene>
    <name evidence="1" type="primary">nadA</name>
    <name type="ordered locus">HPAG1_1303</name>
</gene>
<accession>Q1CRQ2</accession>